<keyword id="KW-0002">3D-structure</keyword>
<keyword id="KW-0024">Alternative initiation</keyword>
<keyword id="KW-0903">Direct protein sequencing</keyword>
<keyword id="KW-0238">DNA-binding</keyword>
<keyword id="KW-0255">Endonuclease</keyword>
<keyword id="KW-0342">GTP-binding</keyword>
<keyword id="KW-0378">Hydrolase</keyword>
<keyword id="KW-0540">Nuclease</keyword>
<keyword id="KW-0547">Nucleotide-binding</keyword>
<keyword id="KW-1185">Reference proteome</keyword>
<keyword id="KW-0680">Restriction system</keyword>
<dbReference type="EC" id="3.1.21.-"/>
<dbReference type="EMBL" id="M58752">
    <property type="protein sequence ID" value="AAA24145.1"/>
    <property type="status" value="ALT_INIT"/>
    <property type="molecule type" value="Genomic_DNA"/>
</dbReference>
<dbReference type="EMBL" id="M24927">
    <property type="protein sequence ID" value="AAA24142.1"/>
    <property type="molecule type" value="Genomic_DNA"/>
</dbReference>
<dbReference type="EMBL" id="U14003">
    <property type="protein sequence ID" value="AAA97243.1"/>
    <property type="status" value="ALT_INIT"/>
    <property type="molecule type" value="Genomic_DNA"/>
</dbReference>
<dbReference type="EMBL" id="U00096">
    <property type="protein sequence ID" value="AAC77302.2"/>
    <property type="molecule type" value="Genomic_DNA"/>
</dbReference>
<dbReference type="EMBL" id="U00096">
    <property type="protein sequence ID" value="QNV50517.1"/>
    <property type="molecule type" value="Genomic_DNA"/>
</dbReference>
<dbReference type="EMBL" id="AP009048">
    <property type="protein sequence ID" value="BAE78336.1"/>
    <property type="molecule type" value="Genomic_DNA"/>
</dbReference>
<dbReference type="PIR" id="A36708">
    <property type="entry name" value="XYECMB"/>
</dbReference>
<dbReference type="RefSeq" id="NP_418766.4">
    <property type="nucleotide sequence ID" value="NC_000913.3"/>
</dbReference>
<dbReference type="RefSeq" id="WP_000443951.1">
    <property type="nucleotide sequence ID" value="NZ_LN832404.1"/>
</dbReference>
<dbReference type="PDB" id="3SSC">
    <property type="method" value="X-ray"/>
    <property type="resolution" value="2.10 A"/>
    <property type="chains" value="A/B=1-161"/>
</dbReference>
<dbReference type="PDB" id="3SSD">
    <property type="method" value="X-ray"/>
    <property type="resolution" value="2.20 A"/>
    <property type="chains" value="A/B=1-161"/>
</dbReference>
<dbReference type="PDB" id="3SSE">
    <property type="method" value="X-ray"/>
    <property type="resolution" value="2.70 A"/>
    <property type="chains" value="A/B=1-161"/>
</dbReference>
<dbReference type="PDB" id="6GCD">
    <property type="method" value="X-ray"/>
    <property type="resolution" value="1.80 A"/>
    <property type="chains" value="A/B=1-161"/>
</dbReference>
<dbReference type="PDB" id="6GCE">
    <property type="method" value="X-ray"/>
    <property type="resolution" value="1.60 A"/>
    <property type="chains" value="A/B=1-161"/>
</dbReference>
<dbReference type="PDB" id="6GCF">
    <property type="method" value="X-ray"/>
    <property type="resolution" value="1.55 A"/>
    <property type="chains" value="A/B=1-161"/>
</dbReference>
<dbReference type="PDB" id="6HZ4">
    <property type="method" value="EM"/>
    <property type="resolution" value="3.60 A"/>
    <property type="chains" value="A/B/C/D/E/F=162-459"/>
</dbReference>
<dbReference type="PDB" id="6HZ5">
    <property type="method" value="EM"/>
    <property type="resolution" value="4.20 A"/>
    <property type="chains" value="A/B/C/D/E/F/G/H/I/J/K/L=162-459"/>
</dbReference>
<dbReference type="PDB" id="6HZ6">
    <property type="method" value="EM"/>
    <property type="resolution" value="4.30 A"/>
    <property type="chains" value="A/B/C/D/E/F/G/H/I/J/K/L=162-459"/>
</dbReference>
<dbReference type="PDB" id="6HZ7">
    <property type="method" value="EM"/>
    <property type="resolution" value="4.30 A"/>
    <property type="chains" value="A/B/C/D/E/F/G/H/I/J/K/L=162-459"/>
</dbReference>
<dbReference type="PDB" id="6HZ8">
    <property type="method" value="EM"/>
    <property type="resolution" value="4.30 A"/>
    <property type="chains" value="A/B/C/D/E/F/G/H/I/J/K/L=162-459"/>
</dbReference>
<dbReference type="PDB" id="6HZ9">
    <property type="method" value="EM"/>
    <property type="resolution" value="4.80 A"/>
    <property type="chains" value="A/B/C/D/E/F/G/H/I/J/K/L=162-459"/>
</dbReference>
<dbReference type="PDB" id="6UT6">
    <property type="method" value="EM"/>
    <property type="resolution" value="3.28 A"/>
    <property type="chains" value="A/B/C/D/E/F=1-459"/>
</dbReference>
<dbReference type="PDB" id="7VSR">
    <property type="method" value="EM"/>
    <property type="resolution" value="4.50 A"/>
    <property type="chains" value="A/B/C/D/E/F/G/H/I/J/K/L=1-459"/>
</dbReference>
<dbReference type="PDB" id="8IJO">
    <property type="method" value="X-ray"/>
    <property type="resolution" value="1.65 A"/>
    <property type="chains" value="A/B=1-161"/>
</dbReference>
<dbReference type="PDB" id="8IJP">
    <property type="method" value="X-ray"/>
    <property type="resolution" value="1.55 A"/>
    <property type="chains" value="A/B=1-161"/>
</dbReference>
<dbReference type="PDB" id="8IK4">
    <property type="method" value="X-ray"/>
    <property type="resolution" value="2.10 A"/>
    <property type="chains" value="A/B=1-161"/>
</dbReference>
<dbReference type="PDB" id="8IK8">
    <property type="method" value="X-ray"/>
    <property type="resolution" value="1.80 A"/>
    <property type="chains" value="A/B=1-161"/>
</dbReference>
<dbReference type="PDB" id="8IKD">
    <property type="method" value="X-ray"/>
    <property type="resolution" value="2.10 A"/>
    <property type="chains" value="A/B=1-161"/>
</dbReference>
<dbReference type="PDBsum" id="3SSC"/>
<dbReference type="PDBsum" id="3SSD"/>
<dbReference type="PDBsum" id="3SSE"/>
<dbReference type="PDBsum" id="6GCD"/>
<dbReference type="PDBsum" id="6GCE"/>
<dbReference type="PDBsum" id="6GCF"/>
<dbReference type="PDBsum" id="6HZ4"/>
<dbReference type="PDBsum" id="6HZ5"/>
<dbReference type="PDBsum" id="6HZ6"/>
<dbReference type="PDBsum" id="6HZ7"/>
<dbReference type="PDBsum" id="6HZ8"/>
<dbReference type="PDBsum" id="6HZ9"/>
<dbReference type="PDBsum" id="6UT6"/>
<dbReference type="PDBsum" id="7VSR"/>
<dbReference type="PDBsum" id="8IJO"/>
<dbReference type="PDBsum" id="8IJP"/>
<dbReference type="PDBsum" id="8IK4"/>
<dbReference type="PDBsum" id="8IK8"/>
<dbReference type="PDBsum" id="8IKD"/>
<dbReference type="EMDB" id="EMD-0310"/>
<dbReference type="EMDB" id="EMD-0311"/>
<dbReference type="EMDB" id="EMD-0312"/>
<dbReference type="EMDB" id="EMD-0313"/>
<dbReference type="EMDB" id="EMD-0314"/>
<dbReference type="EMDB" id="EMD-0315"/>
<dbReference type="EMDB" id="EMD-20867"/>
<dbReference type="EMDB" id="EMD-32114"/>
<dbReference type="SMR" id="P15005"/>
<dbReference type="BioGRID" id="4262765">
    <property type="interactions" value="170"/>
</dbReference>
<dbReference type="BioGRID" id="853362">
    <property type="interactions" value="2"/>
</dbReference>
<dbReference type="ComplexPortal" id="CPX-5285">
    <property type="entry name" value="McrBC 5-methylcytosine-specific restriction endonuclease complex"/>
</dbReference>
<dbReference type="DIP" id="DIP-10168N"/>
<dbReference type="FunCoup" id="P15005">
    <property type="interactions" value="15"/>
</dbReference>
<dbReference type="IntAct" id="P15005">
    <property type="interactions" value="4"/>
</dbReference>
<dbReference type="STRING" id="511145.b4346"/>
<dbReference type="REBASE" id="13377">
    <property type="entry name" value="EcoW3110McrBCP"/>
</dbReference>
<dbReference type="REBASE" id="154028">
    <property type="entry name" value="Ssp60837McrBCP"/>
</dbReference>
<dbReference type="REBASE" id="203811">
    <property type="entry name" value="Keu1446McrBCP"/>
</dbReference>
<dbReference type="REBASE" id="2865">
    <property type="entry name" value="EcoKMcrBC"/>
</dbReference>
<dbReference type="REBASE" id="352138">
    <property type="entry name" value="LxyHY24McrBCP"/>
</dbReference>
<dbReference type="REBASE" id="441251">
    <property type="entry name" value="EcoBL21FMcrBCP"/>
</dbReference>
<dbReference type="REBASE" id="618858">
    <property type="entry name" value="LspCC1McrBC2P"/>
</dbReference>
<dbReference type="REBASE" id="618875">
    <property type="entry name" value="LspCC1McrBCP"/>
</dbReference>
<dbReference type="jPOST" id="P15005"/>
<dbReference type="PaxDb" id="511145-b4346"/>
<dbReference type="EnsemblBacteria" id="AAC77302">
    <property type="protein sequence ID" value="AAC77302"/>
    <property type="gene ID" value="b4346"/>
</dbReference>
<dbReference type="GeneID" id="949122"/>
<dbReference type="KEGG" id="ecj:JW5871"/>
<dbReference type="KEGG" id="eco:b4346"/>
<dbReference type="KEGG" id="ecoc:C3026_23480"/>
<dbReference type="PATRIC" id="fig|511145.12.peg.4492"/>
<dbReference type="EchoBASE" id="EB0569"/>
<dbReference type="eggNOG" id="COG1401">
    <property type="taxonomic scope" value="Bacteria"/>
</dbReference>
<dbReference type="HOGENOM" id="CLU_587598_0_0_6"/>
<dbReference type="InParanoid" id="P15005"/>
<dbReference type="OMA" id="VIMQINE"/>
<dbReference type="OrthoDB" id="9781481at2"/>
<dbReference type="PhylomeDB" id="P15005"/>
<dbReference type="BioCyc" id="EcoCyc:EG10574-MONOMER"/>
<dbReference type="BioCyc" id="MetaCyc:EG10574-MONOMER"/>
<dbReference type="EvolutionaryTrace" id="P15005"/>
<dbReference type="PRO" id="PR:P15005"/>
<dbReference type="Proteomes" id="UP000000625">
    <property type="component" value="Chromosome"/>
</dbReference>
<dbReference type="GO" id="GO:1905348">
    <property type="term" value="C:endonuclease complex"/>
    <property type="evidence" value="ECO:0000353"/>
    <property type="project" value="ComplexPortal"/>
</dbReference>
<dbReference type="GO" id="GO:0005524">
    <property type="term" value="F:ATP binding"/>
    <property type="evidence" value="ECO:0007669"/>
    <property type="project" value="InterPro"/>
</dbReference>
<dbReference type="GO" id="GO:0016887">
    <property type="term" value="F:ATP hydrolysis activity"/>
    <property type="evidence" value="ECO:0007669"/>
    <property type="project" value="InterPro"/>
</dbReference>
<dbReference type="GO" id="GO:0003677">
    <property type="term" value="F:DNA binding"/>
    <property type="evidence" value="ECO:0000314"/>
    <property type="project" value="EcoliWiki"/>
</dbReference>
<dbReference type="GO" id="GO:0010385">
    <property type="term" value="F:double-stranded methylated DNA binding"/>
    <property type="evidence" value="ECO:0000314"/>
    <property type="project" value="EcoCyc"/>
</dbReference>
<dbReference type="GO" id="GO:0004519">
    <property type="term" value="F:endonuclease activity"/>
    <property type="evidence" value="ECO:0007669"/>
    <property type="project" value="UniProtKB-KW"/>
</dbReference>
<dbReference type="GO" id="GO:0005525">
    <property type="term" value="F:GTP binding"/>
    <property type="evidence" value="ECO:0000314"/>
    <property type="project" value="EcoCyc"/>
</dbReference>
<dbReference type="GO" id="GO:0003924">
    <property type="term" value="F:GTPase activity"/>
    <property type="evidence" value="ECO:0000314"/>
    <property type="project" value="EcoliWiki"/>
</dbReference>
<dbReference type="GO" id="GO:0044729">
    <property type="term" value="F:hemi-methylated DNA-binding"/>
    <property type="evidence" value="ECO:0000314"/>
    <property type="project" value="EcoCyc"/>
</dbReference>
<dbReference type="GO" id="GO:0042802">
    <property type="term" value="F:identical protein binding"/>
    <property type="evidence" value="ECO:0000314"/>
    <property type="project" value="EcoCyc"/>
</dbReference>
<dbReference type="GO" id="GO:0015666">
    <property type="term" value="F:restriction endodeoxyribonuclease activity"/>
    <property type="evidence" value="ECO:0000314"/>
    <property type="project" value="EcoliWiki"/>
</dbReference>
<dbReference type="GO" id="GO:0006308">
    <property type="term" value="P:DNA catabolic process"/>
    <property type="evidence" value="ECO:0000314"/>
    <property type="project" value="EcoliWiki"/>
</dbReference>
<dbReference type="GO" id="GO:0009307">
    <property type="term" value="P:DNA restriction-modification system"/>
    <property type="evidence" value="ECO:0000303"/>
    <property type="project" value="ComplexPortal"/>
</dbReference>
<dbReference type="CDD" id="cd00009">
    <property type="entry name" value="AAA"/>
    <property type="match status" value="1"/>
</dbReference>
<dbReference type="FunFam" id="3.30.920.90:FF:000001">
    <property type="entry name" value="5-methylcytosine-specific restriction enzyme B (EcoKMcrBC)"/>
    <property type="match status" value="1"/>
</dbReference>
<dbReference type="Gene3D" id="3.30.920.90">
    <property type="match status" value="1"/>
</dbReference>
<dbReference type="Gene3D" id="3.40.50.300">
    <property type="entry name" value="P-loop containing nucleotide triphosphate hydrolases"/>
    <property type="match status" value="1"/>
</dbReference>
<dbReference type="InterPro" id="IPR003593">
    <property type="entry name" value="AAA+_ATPase"/>
</dbReference>
<dbReference type="InterPro" id="IPR011704">
    <property type="entry name" value="ATPase_dyneun-rel_AAA"/>
</dbReference>
<dbReference type="InterPro" id="IPR021961">
    <property type="entry name" value="McrB_DNA-bd"/>
</dbReference>
<dbReference type="InterPro" id="IPR052934">
    <property type="entry name" value="Methyl-DNA_Rec/Restrict_Enz"/>
</dbReference>
<dbReference type="InterPro" id="IPR027417">
    <property type="entry name" value="P-loop_NTPase"/>
</dbReference>
<dbReference type="NCBIfam" id="NF008457">
    <property type="entry name" value="PRK11331.1"/>
    <property type="match status" value="1"/>
</dbReference>
<dbReference type="PANTHER" id="PTHR37291">
    <property type="entry name" value="5-METHYLCYTOSINE-SPECIFIC RESTRICTION ENZYME B"/>
    <property type="match status" value="1"/>
</dbReference>
<dbReference type="PANTHER" id="PTHR37291:SF1">
    <property type="entry name" value="TYPE IV METHYL-DIRECTED RESTRICTION ENZYME ECOKMCRB SUBUNIT"/>
    <property type="match status" value="1"/>
</dbReference>
<dbReference type="Pfam" id="PF07728">
    <property type="entry name" value="AAA_5"/>
    <property type="match status" value="1"/>
</dbReference>
<dbReference type="Pfam" id="PF12102">
    <property type="entry name" value="MrcB_N"/>
    <property type="match status" value="1"/>
</dbReference>
<dbReference type="SMART" id="SM00382">
    <property type="entry name" value="AAA"/>
    <property type="match status" value="1"/>
</dbReference>
<dbReference type="SUPFAM" id="SSF52540">
    <property type="entry name" value="P-loop containing nucleoside triphosphate hydrolases"/>
    <property type="match status" value="1"/>
</dbReference>
<protein>
    <recommendedName>
        <fullName evidence="4">Type IV methyl-directed restriction enzyme EcoKMcrB subunit</fullName>
        <shortName evidence="5">EcoKMcrBC</shortName>
    </recommendedName>
    <alternativeName>
        <fullName>5-methylcytosine-specific restriction enzyme B</fullName>
        <ecNumber>3.1.21.-</ecNumber>
    </alternativeName>
</protein>
<evidence type="ECO:0000255" key="1"/>
<evidence type="ECO:0000269" key="2">
    <source>
    </source>
</evidence>
<evidence type="ECO:0000269" key="3">
    <source>
    </source>
</evidence>
<evidence type="ECO:0000303" key="4">
    <source>
    </source>
</evidence>
<evidence type="ECO:0000303" key="5">
    <source>
    </source>
</evidence>
<evidence type="ECO:0000305" key="6"/>
<evidence type="ECO:0000305" key="7">
    <source>
    </source>
</evidence>
<evidence type="ECO:0000312" key="8">
    <source>
        <dbReference type="EMBL" id="AAC77302.2"/>
    </source>
</evidence>
<evidence type="ECO:0007829" key="9">
    <source>
        <dbReference type="PDB" id="6GCF"/>
    </source>
</evidence>
<evidence type="ECO:0007829" key="10">
    <source>
        <dbReference type="PDB" id="6UT6"/>
    </source>
</evidence>
<sequence length="459" mass="53157">MESIQPWIEKFIKQAQQQRSQSTKDYPTSYRNLRVKLSFGYGNFTSIPWFAFLGEGQEASNGIYPVILYYKDFDELVLAYGISDTNEPHAQWQFSSDIPKTIAEYFQATSGVYPKKYGQSYYACSQKVSQGIDYTRFASMLDNIINDYKLIFNSGKSVIPPMSKTESYCLEDALNDLFIPETTIETILKRLTIKKNIILQGPPGVGKTFVARRLAYLLTGEKAPQRVNMVQFHQSYSYEDFIQGYRPNGVGFRRKDGIFYNFCQQAKEQPEKKYIFIIDEINRANLSKVFGEVMMLMEHDKRGENWSVPLTYSENDEERFYVPENVYIIGLMNTADRSLAVVDYALRRRFSFIDIEPGFDTPQFRNFLLNKKAEPSFVESLCQKMNELNQEISKEATILGKGFRIGHSYFCCGLEDGTSPDTQWLNEIVMTDIAPLLEEYFFDDPYKQQKWTNKLLGDS</sequence>
<comment type="function">
    <text evidence="7">Recognizes N4- and C5-methylcytosine (and 5-hydroxy-methylcytosines) produced by a broad range of DNA methylases and appears to act against 5-methylcytosine preceded by a purine residue. Binds to DNA containing methylated cytosines; also binds to GTP. Isoform 33 kDa is less active than isoform 51 kDa and may play a role in regulating the activity of isoform 51 kDa by competing with it in DNA and protein binding abilities.</text>
</comment>
<comment type="interaction">
    <interactant intactId="EBI-552513">
        <id>P15005</id>
    </interactant>
    <interactant intactId="EBI-552513">
        <id>P15005</id>
        <label>mcrB</label>
    </interactant>
    <organismsDiffer>false</organismsDiffer>
    <experiments>2</experiments>
</comment>
<comment type="interaction">
    <interactant intactId="EBI-552513">
        <id>P15005</id>
    </interactant>
    <interactant intactId="EBI-25407271">
        <id>P15006</id>
        <label>mcrC</label>
    </interactant>
    <organismsDiffer>false</organismsDiffer>
    <experiments>2</experiments>
</comment>
<comment type="interaction">
    <interactant intactId="EBI-552513">
        <id>P15005</id>
    </interactant>
    <interactant intactId="EBI-554188">
        <id>P31806</id>
        <label>nnr</label>
    </interactant>
    <organismsDiffer>false</organismsDiffer>
    <experiments>3</experiments>
</comment>
<comment type="alternative products">
    <event type="alternative initiation"/>
    <isoform>
        <id>P15005-1</id>
        <name evidence="2">51 kDa</name>
        <sequence type="displayed"/>
    </isoform>
    <isoform>
        <id>P15005-2</id>
        <name evidence="2">33 kDa</name>
        <sequence type="described" ref="VSP_018868"/>
    </isoform>
    <text evidence="3">Both isoforms are expressed at the same level. A frameshift mutation within the codon for residue 58 prevents formation of the 51 kDa but not 33 kDa isoform.</text>
</comment>
<comment type="disruption phenotype">
    <text evidence="3">7.2-fold drop in transformation efficiency with M.AluI-methylated DNA.</text>
</comment>
<comment type="sequence caution" evidence="6">
    <conflict type="erroneous initiation">
        <sequence resource="EMBL-CDS" id="AAA24145"/>
    </conflict>
    <text>Extended N-terminus.</text>
</comment>
<comment type="sequence caution" evidence="6">
    <conflict type="erroneous initiation">
        <sequence resource="EMBL-CDS" id="AAA97243"/>
    </conflict>
    <text>Extended N-terminus.</text>
</comment>
<proteinExistence type="evidence at protein level"/>
<reference key="1">
    <citation type="journal article" date="1990" name="J. Bacteriol.">
        <title>Genetic and sequence organization of the mcrBC locus of Escherichia coli K-12.</title>
        <authorList>
            <person name="Dila D."/>
            <person name="Sutherland E."/>
            <person name="Moran L."/>
            <person name="Slatko B."/>
            <person name="Raleigh E.A."/>
        </authorList>
    </citation>
    <scope>NUCLEOTIDE SEQUENCE [GENOMIC DNA]</scope>
    <source>
        <strain>K12</strain>
    </source>
</reference>
<reference key="2">
    <citation type="journal article" date="1989" name="J. Bacteriol.">
        <title>Nucleotide sequence of the McrB region of Escherichia coli K-12 and evidence for two independent translational initiation sites at the mcrB locus.</title>
        <authorList>
            <person name="Ross T.K."/>
            <person name="Achberger E.C."/>
            <person name="Braymer H.D."/>
        </authorList>
    </citation>
    <scope>NUCLEOTIDE SEQUENCE [GENOMIC DNA]</scope>
    <scope>ISOFORMS 33 KDA AND 51 KDA</scope>
    <scope>FUNCTION</scope>
    <scope>DISRUPTION PHENOTYPE</scope>
    <source>
        <strain>K12</strain>
    </source>
</reference>
<reference key="3">
    <citation type="journal article" date="1995" name="Nucleic Acids Res.">
        <title>Analysis of the Escherichia coli genome VI: DNA sequence of the region from 92.8 through 100 minutes.</title>
        <authorList>
            <person name="Burland V.D."/>
            <person name="Plunkett G. III"/>
            <person name="Sofia H.J."/>
            <person name="Daniels D.L."/>
            <person name="Blattner F.R."/>
        </authorList>
    </citation>
    <scope>NUCLEOTIDE SEQUENCE [LARGE SCALE GENOMIC DNA]</scope>
    <source>
        <strain>K12 / MG1655 / ATCC 47076</strain>
    </source>
</reference>
<reference key="4">
    <citation type="journal article" date="1997" name="Science">
        <title>The complete genome sequence of Escherichia coli K-12.</title>
        <authorList>
            <person name="Blattner F.R."/>
            <person name="Plunkett G. III"/>
            <person name="Bloch C.A."/>
            <person name="Perna N.T."/>
            <person name="Burland V."/>
            <person name="Riley M."/>
            <person name="Collado-Vides J."/>
            <person name="Glasner J.D."/>
            <person name="Rode C.K."/>
            <person name="Mayhew G.F."/>
            <person name="Gregor J."/>
            <person name="Davis N.W."/>
            <person name="Kirkpatrick H.A."/>
            <person name="Goeden M.A."/>
            <person name="Rose D.J."/>
            <person name="Mau B."/>
            <person name="Shao Y."/>
        </authorList>
    </citation>
    <scope>NUCLEOTIDE SEQUENCE [LARGE SCALE GENOMIC DNA]</scope>
    <source>
        <strain>K12 / MG1655 / ATCC 47076</strain>
    </source>
</reference>
<reference key="5">
    <citation type="journal article" date="2006" name="Mol. Syst. Biol.">
        <title>Highly accurate genome sequences of Escherichia coli K-12 strains MG1655 and W3110.</title>
        <authorList>
            <person name="Hayashi K."/>
            <person name="Morooka N."/>
            <person name="Yamamoto Y."/>
            <person name="Fujita K."/>
            <person name="Isono K."/>
            <person name="Choi S."/>
            <person name="Ohtsubo E."/>
            <person name="Baba T."/>
            <person name="Wanner B.L."/>
            <person name="Mori H."/>
            <person name="Horiuchi T."/>
        </authorList>
    </citation>
    <scope>NUCLEOTIDE SEQUENCE [LARGE SCALE GENOMIC DNA]</scope>
    <source>
        <strain>K12 / W3110 / ATCC 27325 / DSM 5911</strain>
    </source>
</reference>
<reference key="6">
    <citation type="journal article" date="1992" name="Gene">
        <title>Purification and N-terminal amino acid sequences of two polypeptides encoded by the mcrB gene from Escherichia coli K-12.</title>
        <authorList>
            <person name="Zheng L."/>
            <person name="Wang X."/>
            <person name="Braymer H.D."/>
        </authorList>
    </citation>
    <scope>PROTEIN SEQUENCE OF 1-10 AND 163-175</scope>
    <scope>ISOFORMS 33 KDA AND 51 KDA</scope>
    <source>
        <strain>K12</strain>
    </source>
</reference>
<reference key="7">
    <citation type="journal article" date="1995" name="EMBO J.">
        <title>McrB: a prokaryotic protein specifically recognizing DNA containing modified cytosine residues.</title>
        <authorList>
            <person name="Krueger T."/>
            <person name="Wild C."/>
            <person name="Noyer-Weidner M."/>
        </authorList>
    </citation>
    <scope>CHARACTERIZATION</scope>
</reference>
<reference key="8">
    <citation type="journal article" date="2003" name="Nucleic Acids Res.">
        <title>A nomenclature for restriction enzymes, DNA methyltransferases, homing endonucleases and their genes.</title>
        <authorList>
            <person name="Roberts R.J."/>
            <person name="Belfort M."/>
            <person name="Bestor T."/>
            <person name="Bhagwat A.S."/>
            <person name="Bickle T.A."/>
            <person name="Bitinaite J."/>
            <person name="Blumenthal R.M."/>
            <person name="Degtyarev S.K."/>
            <person name="Dryden D.T."/>
            <person name="Dybvig K."/>
            <person name="Firman K."/>
            <person name="Gromova E.S."/>
            <person name="Gumport R.I."/>
            <person name="Halford S.E."/>
            <person name="Hattman S."/>
            <person name="Heitman J."/>
            <person name="Hornby D.P."/>
            <person name="Janulaitis A."/>
            <person name="Jeltsch A."/>
            <person name="Josephsen J."/>
            <person name="Kiss A."/>
            <person name="Klaenhammer T.R."/>
            <person name="Kobayashi I."/>
            <person name="Kong H."/>
            <person name="Krueger D.H."/>
            <person name="Lacks S."/>
            <person name="Marinus M.G."/>
            <person name="Miyahara M."/>
            <person name="Morgan R.D."/>
            <person name="Murray N.E."/>
            <person name="Nagaraja V."/>
            <person name="Piekarowicz A."/>
            <person name="Pingoud A."/>
            <person name="Raleigh E."/>
            <person name="Rao D.N."/>
            <person name="Reich N."/>
            <person name="Repin V.E."/>
            <person name="Selker E.U."/>
            <person name="Shaw P.C."/>
            <person name="Stein D.C."/>
            <person name="Stoddard B.L."/>
            <person name="Szybalski W."/>
            <person name="Trautner T.A."/>
            <person name="Van Etten J.L."/>
            <person name="Vitor J.M."/>
            <person name="Wilson G.G."/>
            <person name="Xu S.Y."/>
        </authorList>
    </citation>
    <scope>NOMENCLATURE</scope>
</reference>
<organism>
    <name type="scientific">Escherichia coli (strain K12)</name>
    <dbReference type="NCBI Taxonomy" id="83333"/>
    <lineage>
        <taxon>Bacteria</taxon>
        <taxon>Pseudomonadati</taxon>
        <taxon>Pseudomonadota</taxon>
        <taxon>Gammaproteobacteria</taxon>
        <taxon>Enterobacterales</taxon>
        <taxon>Enterobacteriaceae</taxon>
        <taxon>Escherichia</taxon>
    </lineage>
</organism>
<gene>
    <name type="primary">mcrB</name>
    <name type="synonym">rglB</name>
    <name evidence="8" type="ordered locus">b4346</name>
    <name type="ordered locus">JW5871</name>
</gene>
<name>MCRB_ECOLI</name>
<feature type="chain" id="PRO_0000030347" description="Type IV methyl-directed restriction enzyme EcoKMcrB subunit">
    <location>
        <begin position="1"/>
        <end position="459"/>
    </location>
</feature>
<feature type="binding site" evidence="1">
    <location>
        <begin position="201"/>
        <end position="208"/>
    </location>
    <ligand>
        <name>GTP</name>
        <dbReference type="ChEBI" id="CHEBI:37565"/>
    </ligand>
</feature>
<feature type="binding site" evidence="1">
    <location>
        <begin position="300"/>
        <end position="303"/>
    </location>
    <ligand>
        <name>GTP</name>
        <dbReference type="ChEBI" id="CHEBI:37565"/>
    </ligand>
</feature>
<feature type="binding site" evidence="1">
    <location>
        <begin position="333"/>
        <end position="336"/>
    </location>
    <ligand>
        <name>GTP</name>
        <dbReference type="ChEBI" id="CHEBI:37565"/>
    </ligand>
</feature>
<feature type="splice variant" id="VSP_018868" description="In isoform 33 kDa." evidence="6">
    <location>
        <begin position="1"/>
        <end position="161"/>
    </location>
</feature>
<feature type="sequence conflict" description="In Ref. 2; AAA24142." evidence="6" ref="2">
    <original>TILKRLTIKKNIILQGPPGVGKTFVAR</original>
    <variation>SDTQTINHQKKYYPPGAARRWKNLCCT</variation>
    <location>
        <begin position="186"/>
        <end position="212"/>
    </location>
</feature>
<feature type="sequence conflict" description="In Ref. 2; AAA24142." evidence="6" ref="2">
    <original>PQRVNMVQF</original>
    <variation>RTKYGSV</variation>
    <location>
        <begin position="224"/>
        <end position="232"/>
    </location>
</feature>
<feature type="sequence conflict" description="In Ref. 2; AAA24142." evidence="6" ref="2">
    <original>YRPNGVGFRRKDGIF</original>
    <variation>IVRMASASVKTHI</variation>
    <location>
        <begin position="245"/>
        <end position="259"/>
    </location>
</feature>
<feature type="helix" evidence="9">
    <location>
        <begin position="5"/>
        <end position="17"/>
    </location>
</feature>
<feature type="strand" evidence="9">
    <location>
        <begin position="24"/>
        <end position="26"/>
    </location>
</feature>
<feature type="strand" evidence="9">
    <location>
        <begin position="28"/>
        <end position="30"/>
    </location>
</feature>
<feature type="strand" evidence="9">
    <location>
        <begin position="33"/>
        <end position="39"/>
    </location>
</feature>
<feature type="strand" evidence="9">
    <location>
        <begin position="41"/>
        <end position="43"/>
    </location>
</feature>
<feature type="strand" evidence="9">
    <location>
        <begin position="49"/>
        <end position="53"/>
    </location>
</feature>
<feature type="strand" evidence="9">
    <location>
        <begin position="61"/>
        <end position="70"/>
    </location>
</feature>
<feature type="helix" evidence="9">
    <location>
        <begin position="71"/>
        <end position="73"/>
    </location>
</feature>
<feature type="strand" evidence="9">
    <location>
        <begin position="75"/>
        <end position="82"/>
    </location>
</feature>
<feature type="strand" evidence="9">
    <location>
        <begin position="84"/>
        <end position="86"/>
    </location>
</feature>
<feature type="strand" evidence="9">
    <location>
        <begin position="95"/>
        <end position="97"/>
    </location>
</feature>
<feature type="helix" evidence="9">
    <location>
        <begin position="102"/>
        <end position="110"/>
    </location>
</feature>
<feature type="strand" evidence="9">
    <location>
        <begin position="120"/>
        <end position="127"/>
    </location>
</feature>
<feature type="helix" evidence="9">
    <location>
        <begin position="128"/>
        <end position="130"/>
    </location>
</feature>
<feature type="helix" evidence="9">
    <location>
        <begin position="134"/>
        <end position="153"/>
    </location>
</feature>
<feature type="helix" evidence="10">
    <location>
        <begin position="170"/>
        <end position="174"/>
    </location>
</feature>
<feature type="helix" evidence="10">
    <location>
        <begin position="181"/>
        <end position="193"/>
    </location>
</feature>
<feature type="strand" evidence="10">
    <location>
        <begin position="196"/>
        <end position="201"/>
    </location>
</feature>
<feature type="helix" evidence="10">
    <location>
        <begin position="207"/>
        <end position="219"/>
    </location>
</feature>
<feature type="strand" evidence="10">
    <location>
        <begin position="220"/>
        <end position="222"/>
    </location>
</feature>
<feature type="turn" evidence="10">
    <location>
        <begin position="224"/>
        <end position="226"/>
    </location>
</feature>
<feature type="strand" evidence="10">
    <location>
        <begin position="227"/>
        <end position="231"/>
    </location>
</feature>
<feature type="helix" evidence="10">
    <location>
        <begin position="238"/>
        <end position="241"/>
    </location>
</feature>
<feature type="strand" evidence="10">
    <location>
        <begin position="243"/>
        <end position="248"/>
    </location>
</feature>
<feature type="strand" evidence="10">
    <location>
        <begin position="251"/>
        <end position="256"/>
    </location>
</feature>
<feature type="helix" evidence="10">
    <location>
        <begin position="258"/>
        <end position="267"/>
    </location>
</feature>
<feature type="strand" evidence="10">
    <location>
        <begin position="274"/>
        <end position="280"/>
    </location>
</feature>
<feature type="helix" evidence="10">
    <location>
        <begin position="286"/>
        <end position="290"/>
    </location>
</feature>
<feature type="helix" evidence="10">
    <location>
        <begin position="291"/>
        <end position="293"/>
    </location>
</feature>
<feature type="turn" evidence="10">
    <location>
        <begin position="294"/>
        <end position="297"/>
    </location>
</feature>
<feature type="helix" evidence="10">
    <location>
        <begin position="299"/>
        <end position="301"/>
    </location>
</feature>
<feature type="strand" evidence="10">
    <location>
        <begin position="314"/>
        <end position="317"/>
    </location>
</feature>
<feature type="strand" evidence="10">
    <location>
        <begin position="326"/>
        <end position="333"/>
    </location>
</feature>
<feature type="helix" evidence="10">
    <location>
        <begin position="344"/>
        <end position="349"/>
    </location>
</feature>
<feature type="strand" evidence="10">
    <location>
        <begin position="351"/>
        <end position="354"/>
    </location>
</feature>
<feature type="strand" evidence="10">
    <location>
        <begin position="359"/>
        <end position="361"/>
    </location>
</feature>
<feature type="helix" evidence="10">
    <location>
        <begin position="362"/>
        <end position="369"/>
    </location>
</feature>
<feature type="turn" evidence="10">
    <location>
        <begin position="370"/>
        <end position="372"/>
    </location>
</feature>
<feature type="helix" evidence="10">
    <location>
        <begin position="375"/>
        <end position="392"/>
    </location>
</feature>
<feature type="turn" evidence="10">
    <location>
        <begin position="393"/>
        <end position="395"/>
    </location>
</feature>
<feature type="strand" evidence="10">
    <location>
        <begin position="397"/>
        <end position="399"/>
    </location>
</feature>
<feature type="helix" evidence="10">
    <location>
        <begin position="409"/>
        <end position="411"/>
    </location>
</feature>
<feature type="helix" evidence="10">
    <location>
        <begin position="414"/>
        <end position="416"/>
    </location>
</feature>
<feature type="helix" evidence="10">
    <location>
        <begin position="422"/>
        <end position="431"/>
    </location>
</feature>
<feature type="helix" evidence="10">
    <location>
        <begin position="433"/>
        <end position="440"/>
    </location>
</feature>
<feature type="helix" evidence="10">
    <location>
        <begin position="445"/>
        <end position="453"/>
    </location>
</feature>
<feature type="initiator methionine" description="Removed" evidence="2">
    <location sequence="P15005-2">
        <position position="1"/>
    </location>
</feature>
<accession>P15005</accession>
<accession>A0A7H2C770</accession>
<accession>Q2M5X0</accession>